<protein>
    <recommendedName>
        <fullName evidence="1">Protein YcgL</fullName>
    </recommendedName>
</protein>
<gene>
    <name evidence="1" type="primary">ycgL</name>
    <name type="ordered locus">SFV_1186</name>
</gene>
<proteinExistence type="inferred from homology"/>
<feature type="chain" id="PRO_0000375386" description="Protein YcgL">
    <location>
        <begin position="1"/>
        <end position="108"/>
    </location>
</feature>
<feature type="domain" description="YcgL" evidence="1">
    <location>
        <begin position="12"/>
        <end position="96"/>
    </location>
</feature>
<dbReference type="EMBL" id="CP000266">
    <property type="protein sequence ID" value="ABF03394.1"/>
    <property type="molecule type" value="Genomic_DNA"/>
</dbReference>
<dbReference type="SMR" id="Q0T5M1"/>
<dbReference type="KEGG" id="sfv:SFV_1186"/>
<dbReference type="HOGENOM" id="CLU_155118_1_0_6"/>
<dbReference type="Proteomes" id="UP000000659">
    <property type="component" value="Chromosome"/>
</dbReference>
<dbReference type="Gene3D" id="3.10.510.20">
    <property type="entry name" value="YcgL domain"/>
    <property type="match status" value="1"/>
</dbReference>
<dbReference type="HAMAP" id="MF_01866">
    <property type="entry name" value="UPF0745"/>
    <property type="match status" value="1"/>
</dbReference>
<dbReference type="InterPro" id="IPR038068">
    <property type="entry name" value="YcgL-like_sf"/>
</dbReference>
<dbReference type="InterPro" id="IPR027354">
    <property type="entry name" value="YcgL_dom"/>
</dbReference>
<dbReference type="PANTHER" id="PTHR38109">
    <property type="entry name" value="PROTEIN YCGL"/>
    <property type="match status" value="1"/>
</dbReference>
<dbReference type="PANTHER" id="PTHR38109:SF1">
    <property type="entry name" value="PROTEIN YCGL"/>
    <property type="match status" value="1"/>
</dbReference>
<dbReference type="Pfam" id="PF05166">
    <property type="entry name" value="YcgL"/>
    <property type="match status" value="1"/>
</dbReference>
<dbReference type="SUPFAM" id="SSF160191">
    <property type="entry name" value="YcgL-like"/>
    <property type="match status" value="1"/>
</dbReference>
<dbReference type="PROSITE" id="PS51648">
    <property type="entry name" value="YCGL"/>
    <property type="match status" value="1"/>
</dbReference>
<evidence type="ECO:0000255" key="1">
    <source>
        <dbReference type="HAMAP-Rule" id="MF_01866"/>
    </source>
</evidence>
<reference key="1">
    <citation type="journal article" date="2006" name="BMC Genomics">
        <title>Complete genome sequence of Shigella flexneri 5b and comparison with Shigella flexneri 2a.</title>
        <authorList>
            <person name="Nie H."/>
            <person name="Yang F."/>
            <person name="Zhang X."/>
            <person name="Yang J."/>
            <person name="Chen L."/>
            <person name="Wang J."/>
            <person name="Xiong Z."/>
            <person name="Peng J."/>
            <person name="Sun L."/>
            <person name="Dong J."/>
            <person name="Xue Y."/>
            <person name="Xu X."/>
            <person name="Chen S."/>
            <person name="Yao Z."/>
            <person name="Shen Y."/>
            <person name="Jin Q."/>
        </authorList>
    </citation>
    <scope>NUCLEOTIDE SEQUENCE [LARGE SCALE GENOMIC DNA]</scope>
    <source>
        <strain>8401</strain>
    </source>
</reference>
<organism>
    <name type="scientific">Shigella flexneri serotype 5b (strain 8401)</name>
    <dbReference type="NCBI Taxonomy" id="373384"/>
    <lineage>
        <taxon>Bacteria</taxon>
        <taxon>Pseudomonadati</taxon>
        <taxon>Pseudomonadota</taxon>
        <taxon>Gammaproteobacteria</taxon>
        <taxon>Enterobacterales</taxon>
        <taxon>Enterobacteriaceae</taxon>
        <taxon>Shigella</taxon>
    </lineage>
</organism>
<sequence length="108" mass="12400">MPKPGILKSKSMFCVIYRSSKRDQTYLYVEKKDDFSRVPEELMKGFGQPQLAMILPLDGRKKLVNADIEKVKLALTEQGYYLQLPPPPEDLLKQHLSVMGQKTDDTNK</sequence>
<accession>Q0T5M1</accession>
<name>YCGL_SHIF8</name>